<keyword id="KW-0002">3D-structure</keyword>
<keyword id="KW-0350">Heme biosynthesis</keyword>
<keyword id="KW-0406">Ion transport</keyword>
<keyword id="KW-0408">Iron</keyword>
<keyword id="KW-0409">Iron storage</keyword>
<keyword id="KW-0410">Iron transport</keyword>
<keyword id="KW-0496">Mitochondrion</keyword>
<keyword id="KW-0560">Oxidoreductase</keyword>
<keyword id="KW-1185">Reference proteome</keyword>
<keyword id="KW-0809">Transit peptide</keyword>
<keyword id="KW-0813">Transport</keyword>
<gene>
    <name evidence="16" type="primary">YFH1</name>
    <name evidence="16" type="ordered locus">YDL120W</name>
</gene>
<organism evidence="15">
    <name type="scientific">Saccharomyces cerevisiae (strain ATCC 204508 / S288c)</name>
    <name type="common">Baker's yeast</name>
    <dbReference type="NCBI Taxonomy" id="559292"/>
    <lineage>
        <taxon>Eukaryota</taxon>
        <taxon>Fungi</taxon>
        <taxon>Dikarya</taxon>
        <taxon>Ascomycota</taxon>
        <taxon>Saccharomycotina</taxon>
        <taxon>Saccharomycetes</taxon>
        <taxon>Saccharomycetales</taxon>
        <taxon>Saccharomycetaceae</taxon>
        <taxon>Saccharomyces</taxon>
    </lineage>
</organism>
<comment type="function">
    <text evidence="4 5 6 9 12 13">Promotes the biosynthesis of heme as well as the assembly and repair of iron-sulfur clusters by delivering Fe(2+) to proteins involved in these pathways. Plays a role in the protection against iron-catalyzed oxidative stress through its ability to catalyze the oxidation of Fe(2+) to Fe(3+). Can store large amounts of the metal in the form of a ferrihydrite mineral by oligomerization. May be involved in regulation of the mitochondrial electron transport chain.</text>
</comment>
<comment type="catalytic activity">
    <reaction evidence="5">
        <text>4 Fe(2+) + O2 + 4 H(+) = 4 Fe(3+) + 2 H2O</text>
        <dbReference type="Rhea" id="RHEA:11148"/>
        <dbReference type="ChEBI" id="CHEBI:15377"/>
        <dbReference type="ChEBI" id="CHEBI:15378"/>
        <dbReference type="ChEBI" id="CHEBI:15379"/>
        <dbReference type="ChEBI" id="CHEBI:29033"/>
        <dbReference type="ChEBI" id="CHEBI:29034"/>
        <dbReference type="EC" id="1.16.3.1"/>
    </reaction>
</comment>
<comment type="subunit">
    <text evidence="1 2 4 6 7 8 9 10 11">Monomer. Forms a 24-mer complex made up of 8 copies of a trimeric subcomplex (PubMed:17027502, PubMed:18393441, PubMed:26941001, PubMed:28548666). Increments in mitochondrial iron uptake induce stepwise assembly of species ranging from trimers to 24-mers (PubMed:17027502). Interacts with ISU1 with a 1 to 1 stoichiometry; the interaction is direct (PubMed:10588895, PubMed:12947415, PubMed:18319250, PubMed:19884169, PubMed:26941001, PubMed:28548666). Interacts with YHB1, SDH1, SDH2, AIM45 and CIR1 (PubMed:15961414).</text>
</comment>
<comment type="interaction">
    <interactant intactId="EBI-2206814">
        <id>Q07540</id>
    </interactant>
    <interactant intactId="EBI-29901">
        <id>Q03020</id>
        <label>ISU1</label>
    </interactant>
    <organismsDiffer>false</organismsDiffer>
    <experiments>4</experiments>
</comment>
<comment type="interaction">
    <interactant intactId="EBI-2206814">
        <id>Q07540</id>
    </interactant>
    <interactant intactId="EBI-2206814">
        <id>Q07540</id>
        <label>YFH1</label>
    </interactant>
    <organismsDiffer>false</organismsDiffer>
    <experiments>2</experiments>
</comment>
<comment type="interaction">
    <interactant intactId="EBI-2206814">
        <id>Q07540</id>
    </interactant>
    <interactant intactId="EBI-6905">
        <id>P39676</id>
        <label>YHB1</label>
    </interactant>
    <organismsDiffer>false</organismsDiffer>
    <experiments>2</experiments>
</comment>
<comment type="subcellular location">
    <subcellularLocation>
        <location evidence="12 13">Mitochondrion matrix</location>
    </subcellularLocation>
</comment>
<comment type="PTM">
    <text>Processed in two steps by mitochondrial processing peptidase (MPP). MPP first cleaves the precursor to intermediate form and subsequently converts the intermediate to mature size protein.</text>
</comment>
<comment type="miscellaneous">
    <text evidence="3">Present with 1560 molecules/cell in log phase SD medium.</text>
</comment>
<comment type="similarity">
    <text evidence="14">Belongs to the frataxin family.</text>
</comment>
<reference key="1">
    <citation type="journal article" date="1997" name="Nature">
        <title>The nucleotide sequence of Saccharomyces cerevisiae chromosome IV.</title>
        <authorList>
            <person name="Jacq C."/>
            <person name="Alt-Moerbe J."/>
            <person name="Andre B."/>
            <person name="Arnold W."/>
            <person name="Bahr A."/>
            <person name="Ballesta J.P.G."/>
            <person name="Bargues M."/>
            <person name="Baron L."/>
            <person name="Becker A."/>
            <person name="Biteau N."/>
            <person name="Bloecker H."/>
            <person name="Blugeon C."/>
            <person name="Boskovic J."/>
            <person name="Brandt P."/>
            <person name="Brueckner M."/>
            <person name="Buitrago M.J."/>
            <person name="Coster F."/>
            <person name="Delaveau T."/>
            <person name="del Rey F."/>
            <person name="Dujon B."/>
            <person name="Eide L.G."/>
            <person name="Garcia-Cantalejo J.M."/>
            <person name="Goffeau A."/>
            <person name="Gomez-Peris A."/>
            <person name="Granotier C."/>
            <person name="Hanemann V."/>
            <person name="Hankeln T."/>
            <person name="Hoheisel J.D."/>
            <person name="Jaeger W."/>
            <person name="Jimenez A."/>
            <person name="Jonniaux J.-L."/>
            <person name="Kraemer C."/>
            <person name="Kuester H."/>
            <person name="Laamanen P."/>
            <person name="Legros Y."/>
            <person name="Louis E.J."/>
            <person name="Moeller-Rieker S."/>
            <person name="Monnet A."/>
            <person name="Moro M."/>
            <person name="Mueller-Auer S."/>
            <person name="Nussbaumer B."/>
            <person name="Paricio N."/>
            <person name="Paulin L."/>
            <person name="Perea J."/>
            <person name="Perez-Alonso M."/>
            <person name="Perez-Ortin J.E."/>
            <person name="Pohl T.M."/>
            <person name="Prydz H."/>
            <person name="Purnelle B."/>
            <person name="Rasmussen S.W."/>
            <person name="Remacha M.A."/>
            <person name="Revuelta J.L."/>
            <person name="Rieger M."/>
            <person name="Salom D."/>
            <person name="Saluz H.P."/>
            <person name="Saiz J.E."/>
            <person name="Saren A.-M."/>
            <person name="Schaefer M."/>
            <person name="Scharfe M."/>
            <person name="Schmidt E.R."/>
            <person name="Schneider C."/>
            <person name="Scholler P."/>
            <person name="Schwarz S."/>
            <person name="Soler-Mira A."/>
            <person name="Urrestarazu L.A."/>
            <person name="Verhasselt P."/>
            <person name="Vissers S."/>
            <person name="Voet M."/>
            <person name="Volckaert G."/>
            <person name="Wagner G."/>
            <person name="Wambutt R."/>
            <person name="Wedler E."/>
            <person name="Wedler H."/>
            <person name="Woelfl S."/>
            <person name="Harris D.E."/>
            <person name="Bowman S."/>
            <person name="Brown D."/>
            <person name="Churcher C.M."/>
            <person name="Connor R."/>
            <person name="Dedman K."/>
            <person name="Gentles S."/>
            <person name="Hamlin N."/>
            <person name="Hunt S."/>
            <person name="Jones L."/>
            <person name="McDonald S."/>
            <person name="Murphy L.D."/>
            <person name="Niblett D."/>
            <person name="Odell C."/>
            <person name="Oliver K."/>
            <person name="Rajandream M.A."/>
            <person name="Richards C."/>
            <person name="Shore L."/>
            <person name="Walsh S.V."/>
            <person name="Barrell B.G."/>
            <person name="Dietrich F.S."/>
            <person name="Mulligan J.T."/>
            <person name="Allen E."/>
            <person name="Araujo R."/>
            <person name="Aviles E."/>
            <person name="Berno A."/>
            <person name="Carpenter J."/>
            <person name="Chen E."/>
            <person name="Cherry J.M."/>
            <person name="Chung E."/>
            <person name="Duncan M."/>
            <person name="Hunicke-Smith S."/>
            <person name="Hyman R.W."/>
            <person name="Komp C."/>
            <person name="Lashkari D."/>
            <person name="Lew H."/>
            <person name="Lin D."/>
            <person name="Mosedale D."/>
            <person name="Nakahara K."/>
            <person name="Namath A."/>
            <person name="Oefner P."/>
            <person name="Oh C."/>
            <person name="Petel F.X."/>
            <person name="Roberts D."/>
            <person name="Schramm S."/>
            <person name="Schroeder M."/>
            <person name="Shogren T."/>
            <person name="Shroff N."/>
            <person name="Winant A."/>
            <person name="Yelton M.A."/>
            <person name="Botstein D."/>
            <person name="Davis R.W."/>
            <person name="Johnston M."/>
            <person name="Andrews S."/>
            <person name="Brinkman R."/>
            <person name="Cooper J."/>
            <person name="Ding H."/>
            <person name="Du Z."/>
            <person name="Favello A."/>
            <person name="Fulton L."/>
            <person name="Gattung S."/>
            <person name="Greco T."/>
            <person name="Hallsworth K."/>
            <person name="Hawkins J."/>
            <person name="Hillier L.W."/>
            <person name="Jier M."/>
            <person name="Johnson D."/>
            <person name="Johnston L."/>
            <person name="Kirsten J."/>
            <person name="Kucaba T."/>
            <person name="Langston Y."/>
            <person name="Latreille P."/>
            <person name="Le T."/>
            <person name="Mardis E."/>
            <person name="Menezes S."/>
            <person name="Miller N."/>
            <person name="Nhan M."/>
            <person name="Pauley A."/>
            <person name="Peluso D."/>
            <person name="Rifkin L."/>
            <person name="Riles L."/>
            <person name="Taich A."/>
            <person name="Trevaskis E."/>
            <person name="Vignati D."/>
            <person name="Wilcox L."/>
            <person name="Wohldman P."/>
            <person name="Vaudin M."/>
            <person name="Wilson R."/>
            <person name="Waterston R."/>
            <person name="Albermann K."/>
            <person name="Hani J."/>
            <person name="Heumann K."/>
            <person name="Kleine K."/>
            <person name="Mewes H.-W."/>
            <person name="Zollner A."/>
            <person name="Zaccaria P."/>
        </authorList>
    </citation>
    <scope>NUCLEOTIDE SEQUENCE [LARGE SCALE GENOMIC DNA]</scope>
    <source>
        <strain>ATCC 204508 / S288c</strain>
    </source>
</reference>
<reference key="2">
    <citation type="journal article" date="2014" name="G3 (Bethesda)">
        <title>The reference genome sequence of Saccharomyces cerevisiae: Then and now.</title>
        <authorList>
            <person name="Engel S.R."/>
            <person name="Dietrich F.S."/>
            <person name="Fisk D.G."/>
            <person name="Binkley G."/>
            <person name="Balakrishnan R."/>
            <person name="Costanzo M.C."/>
            <person name="Dwight S.S."/>
            <person name="Hitz B.C."/>
            <person name="Karra K."/>
            <person name="Nash R.S."/>
            <person name="Weng S."/>
            <person name="Wong E.D."/>
            <person name="Lloyd P."/>
            <person name="Skrzypek M.S."/>
            <person name="Miyasato S.R."/>
            <person name="Simison M."/>
            <person name="Cherry J.M."/>
        </authorList>
    </citation>
    <scope>GENOME REANNOTATION</scope>
    <source>
        <strain>ATCC 204508 / S288c</strain>
    </source>
</reference>
<reference key="3">
    <citation type="journal article" date="2007" name="Genome Res.">
        <title>Approaching a complete repository of sequence-verified protein-encoding clones for Saccharomyces cerevisiae.</title>
        <authorList>
            <person name="Hu Y."/>
            <person name="Rolfs A."/>
            <person name="Bhullar B."/>
            <person name="Murthy T.V.S."/>
            <person name="Zhu C."/>
            <person name="Berger M.F."/>
            <person name="Camargo A.A."/>
            <person name="Kelley F."/>
            <person name="McCarron S."/>
            <person name="Jepson D."/>
            <person name="Richardson A."/>
            <person name="Raphael J."/>
            <person name="Moreira D."/>
            <person name="Taycher E."/>
            <person name="Zuo D."/>
            <person name="Mohr S."/>
            <person name="Kane M.F."/>
            <person name="Williamson J."/>
            <person name="Simpson A.J.G."/>
            <person name="Bulyk M.L."/>
            <person name="Harlow E."/>
            <person name="Marsischky G."/>
            <person name="Kolodner R.D."/>
            <person name="LaBaer J."/>
        </authorList>
    </citation>
    <scope>NUCLEOTIDE SEQUENCE [GENOMIC DNA]</scope>
    <source>
        <strain>ATCC 204508 / S288c</strain>
    </source>
</reference>
<reference key="4">
    <citation type="journal article" date="1997" name="Science">
        <title>Regulation of mitochondrial iron accumulation by Yfh1p, a putative homolog of frataxin.</title>
        <authorList>
            <person name="Babcock M."/>
            <person name="de Silva D."/>
            <person name="Oaks R."/>
            <person name="Davis-Kaplan S."/>
            <person name="Jiralerspong S."/>
            <person name="Montermini L."/>
            <person name="Pandolfo M."/>
            <person name="Kaplan J."/>
        </authorList>
    </citation>
    <scope>FUNCTION</scope>
    <scope>SUBCELLULAR LOCATION</scope>
</reference>
<reference key="5">
    <citation type="journal article" date="1999" name="J. Biol. Chem.">
        <title>The yeast frataxin homologue mediates mitochondrial iron efflux. Evidence for a mitochondrial iron cycle.</title>
        <authorList>
            <person name="Radisky D.C."/>
            <person name="Babcock M.C."/>
            <person name="Kaplan J."/>
        </authorList>
    </citation>
    <scope>FUNCTION</scope>
    <scope>SUBCELLULAR LOCATION</scope>
</reference>
<reference key="6">
    <citation type="journal article" date="1999" name="Hum. Mol. Genet.">
        <title>Maturation of frataxin within mammalian and yeast mitochondria: one-step processing by matrix processing peptidase.</title>
        <authorList>
            <person name="Gordon D.M."/>
            <person name="Shi Q."/>
            <person name="Dancis A."/>
            <person name="Pain D."/>
        </authorList>
    </citation>
    <scope>PROCESSING</scope>
</reference>
<reference key="7">
    <citation type="journal article" date="1999" name="J. Biol. Chem.">
        <title>Yeast and human frataxin are processed to mature form in two sequential steps by the mitochondrial processing peptidase.</title>
        <authorList>
            <person name="Branda S.S."/>
            <person name="Cavadini P."/>
            <person name="Adamec J."/>
            <person name="Kalousek F."/>
            <person name="Taroni F."/>
            <person name="Isaya G."/>
        </authorList>
    </citation>
    <scope>PROCESSING</scope>
</reference>
<reference key="8">
    <citation type="journal article" date="1999" name="J. Mol. Biol.">
        <title>Saccharomyces cerevisiae ISU1 and ISU2: members of a well-conserved gene family for iron-sulfur cluster assembly.</title>
        <authorList>
            <person name="Garland S.A."/>
            <person name="Hoff K."/>
            <person name="Vickery L.E."/>
            <person name="Culotta V.C."/>
        </authorList>
    </citation>
    <scope>INTERACTION WITH ISU1</scope>
</reference>
<reference key="9">
    <citation type="journal article" date="2003" name="EMBO Rep.">
        <title>An interaction between frataxin and Isu1/Nfs1 that is crucial for Fe/S cluster synthesis on Isu1.</title>
        <authorList>
            <person name="Gerber J."/>
            <person name="Muhlenhoff U."/>
            <person name="Lill R."/>
        </authorList>
    </citation>
    <scope>INTERACTION WITH ISU1</scope>
</reference>
<reference key="10">
    <citation type="journal article" date="2003" name="Nature">
        <title>Global analysis of protein expression in yeast.</title>
        <authorList>
            <person name="Ghaemmaghami S."/>
            <person name="Huh W.-K."/>
            <person name="Bower K."/>
            <person name="Howson R.W."/>
            <person name="Belle A."/>
            <person name="Dephoure N."/>
            <person name="O'Shea E.K."/>
            <person name="Weissman J.S."/>
        </authorList>
    </citation>
    <scope>LEVEL OF PROTEIN EXPRESSION [LARGE SCALE ANALYSIS]</scope>
</reference>
<reference key="11">
    <citation type="journal article" date="2005" name="Hum. Mol. Genet.">
        <title>Frataxin interacts functionally with mitochondrial electron transport chain proteins.</title>
        <authorList>
            <person name="Gonzalez-Cabo P."/>
            <person name="Vazquez-Manrique R.P."/>
            <person name="Garcia-Gimeno M.A."/>
            <person name="Sanz P."/>
            <person name="Palau F."/>
        </authorList>
    </citation>
    <scope>FUNCTION</scope>
    <scope>INTERACTION WITH YHB1; SDH1; SDH2; AIM45 AND CIR1</scope>
</reference>
<reference key="12">
    <citation type="journal article" date="2006" name="Hum. Mol. Genet.">
        <title>Mitochondrial iron detoxification is a primary function of frataxin that limits oxidative damage and preserves cell longevity.</title>
        <authorList>
            <person name="Gakh O."/>
            <person name="Park S."/>
            <person name="Liu G."/>
            <person name="Macomber L."/>
            <person name="Imlay J.A."/>
            <person name="Ferreira G.C."/>
            <person name="Isaya G."/>
        </authorList>
    </citation>
    <scope>FUNCTION</scope>
    <scope>CATALYTIC ACTIVITY</scope>
    <scope>MUTAGENESIS OF ASP-79; ASP-82; GLU-93; ASP-97 AND GLU-103</scope>
</reference>
<reference key="13">
    <citation type="journal article" date="2008" name="J. Biol. Chem.">
        <title>Binding of yeast frataxin to the scaffold for Fe-S cluster biogenesis, Isu.</title>
        <authorList>
            <person name="Wang T."/>
            <person name="Craig E.A."/>
        </authorList>
    </citation>
    <scope>INTERACTION WITH ISU1</scope>
    <scope>MUTAGENESIS OF 122-ASN--GLU-124</scope>
</reference>
<reference key="14">
    <citation type="journal article" date="2010" name="Hum. Mol. Genet.">
        <title>Frataxin interacts with Isu1 through a conserved tryptophan in its beta-sheet.</title>
        <authorList>
            <person name="Leidgens S."/>
            <person name="De Smet S."/>
            <person name="Foury F."/>
        </authorList>
    </citation>
    <scope>FUNCTION IN IRON-SULFUR CLUSTER BIOSYNTHESIS</scope>
    <scope>INTERACTION WITH ISU1</scope>
    <scope>MUTAGENESIS OF GLN-129; ILE-130; TRP-131 AND ARG-141</scope>
</reference>
<reference key="15">
    <citation type="journal article" date="2006" name="Structure">
        <title>The structures of frataxin oligomers reveal the mechanism for the delivery and detoxification of iron.</title>
        <authorList>
            <person name="Karlberg T."/>
            <person name="Schagerlof U."/>
            <person name="Gakh O."/>
            <person name="Park S."/>
            <person name="Ryde U."/>
            <person name="Lindahl M."/>
            <person name="Leath K."/>
            <person name="Garman E."/>
            <person name="Isaya G."/>
            <person name="Al-Karadaghi S."/>
        </authorList>
    </citation>
    <scope>X-RAY CRYSTALLOGRAPHY (3.01 ANGSTROMS) OF 52-174 ALONE AND IN COMPLEX WITH IRON</scope>
    <scope>ELECTRON MICROSCOPY OF MUTANT ALA-73</scope>
    <scope>FUNCTION</scope>
    <scope>SUBUNIT</scope>
</reference>
<reference key="16">
    <citation type="journal article" date="2008" name="Biochemistry">
        <title>Structural basis of the iron storage function of frataxin from single-particle reconstruction of the iron-loaded oligomer.</title>
        <authorList>
            <person name="Schagerlof U."/>
            <person name="Elmlund H."/>
            <person name="Gakh O."/>
            <person name="Nordlund G."/>
            <person name="Hebert H."/>
            <person name="Lindahl M."/>
            <person name="Isaya G."/>
            <person name="Al-Karadaghi S."/>
        </authorList>
    </citation>
    <scope>ELECTRON MICROSCOPY OF MUTANT ALA-73 (13 ANGSTROMS)</scope>
    <scope>SUBUNIT</scope>
</reference>
<reference evidence="17" key="17">
    <citation type="journal article" date="2016" name="J. Biol. Chem.">
        <title>Architecture of the Yeast Mitochondrial Iron-Sulfur Cluster Assembly Machinery: THE SUB-COMPLEX FORMED BY THE IRON DONOR, Yfh1 PROTEIN, AND THE SCAFFOLD, Isu1 PROTEIN.</title>
        <authorList>
            <person name="Ranatunga W."/>
            <person name="Gakh O."/>
            <person name="Galeano B.K."/>
            <person name="Smith D.Y. IV"/>
            <person name="Soederberg C.A."/>
            <person name="Al-Karadaghi S."/>
            <person name="Thompson J.R."/>
            <person name="Isaya G."/>
        </authorList>
    </citation>
    <scope>STRUCTURE BY ELECTRON MICROSCOPY (17.50 ANGSTROMS) OF 52-172 OF MUTANT ALA-73 IN COMPLEX WITH ISU1</scope>
    <scope>SUBUNIT</scope>
    <scope>INTERACTION WITH ISU1</scope>
    <scope>MUTAGENESIS OF TYR-73</scope>
</reference>
<reference evidence="18" key="18">
    <citation type="journal article" date="2017" name="Metallomics">
        <title>Zinc and the iron donor frataxin regulate oligomerization of the scaffold protein to form new Fe-S cluster assembly centers.</title>
        <authorList>
            <person name="Galeano B.K."/>
            <person name="Ranatunga W."/>
            <person name="Gakh O."/>
            <person name="Smith D.Y."/>
            <person name="Thompson J.R."/>
            <person name="Isaya G."/>
        </authorList>
    </citation>
    <scope>STRUCTURE BY ELECTRON MICROSCOPY (15.60 ANGSTROMS) OF 52-172</scope>
    <scope>INTERACTION WITH ISU1</scope>
</reference>
<accession>Q07540</accession>
<accession>D6VRN0</accession>
<feature type="transit peptide" description="Mitochondrion" evidence="14">
    <location>
        <begin position="1"/>
        <end position="21"/>
    </location>
</feature>
<feature type="chain" id="PRO_0000010135" description="Frataxin homolog intermediate form">
    <location>
        <begin position="22"/>
        <end position="174"/>
    </location>
</feature>
<feature type="chain" id="PRO_0000010136" description="Frataxin homolog, mitochondrial">
    <location>
        <begin position="52"/>
        <end position="174"/>
    </location>
</feature>
<feature type="mutagenesis site" description="Removes the iron-dependence for oligomerization and interaction with components of the core iron-sulfur cluster (ISC) assembly complex." evidence="10">
    <original>Y</original>
    <variation>A</variation>
    <location>
        <position position="73"/>
    </location>
</feature>
<feature type="mutagenesis site" description="Nearly abolishes ferroxidase activity, slows down oligomerization, impairs resistance to iron-catalyzed oxidative stress, no effect on Fe(2+) delivery and cell growth; when associated with A-82." evidence="5">
    <original>D</original>
    <variation>A</variation>
    <location>
        <position position="79"/>
    </location>
</feature>
<feature type="mutagenesis site" description="Nearly abolishes ferroxidase activity, slows down oligomerization, impairs resistance to iron-catalyzed oxidative stress, no effect on Fe(2+) delivery and cell growth; when associated with A-79." evidence="5">
    <original>D</original>
    <variation>A</variation>
    <location>
        <position position="82"/>
    </location>
</feature>
<feature type="mutagenesis site" description="Impairs oligomerization and iron mineralization." evidence="5">
    <original>E</original>
    <variation>A</variation>
    <location>
        <position position="93"/>
    </location>
</feature>
<feature type="mutagenesis site" description="Impairs resistance to iron-catalyzed oxidative stress, no effect on Fe(2+) delivery and cell growth; when associated with A-97 and A-103." evidence="5">
    <original>E</original>
    <variation>A</variation>
    <location>
        <position position="93"/>
    </location>
</feature>
<feature type="mutagenesis site" description="Impairs resistance to iron-catalyzed oxidative stress, no effect on Fe(2+) delivery and cell growth; when associated with A-93 and A-103." evidence="5">
    <original>D</original>
    <variation>A</variation>
    <location>
        <position position="97"/>
    </location>
</feature>
<feature type="mutagenesis site" description="Impairs resistance to iron-catalyzed oxidative stress, no effect on Fe(2+) delivery and cell growth; when associated with A-93 and A-97." evidence="5">
    <original>E</original>
    <variation>A</variation>
    <location>
        <position position="103"/>
    </location>
</feature>
<feature type="mutagenesis site" description="Impairs cell growth, lowers activity of mitochondrial iron-sulfur cluster-containing enzymes, no effect on iron binding and oligomerization." evidence="7">
    <original>NKQ</original>
    <variation>ATA</variation>
    <location>
        <begin position="122"/>
        <end position="124"/>
    </location>
</feature>
<feature type="mutagenesis site" description="Impairs cell growth and lowers aconitase activity." evidence="9">
    <original>Q</original>
    <variation>A</variation>
    <location>
        <position position="129"/>
    </location>
</feature>
<feature type="mutagenesis site" description="Impairs cell growth and lowers aconitase activity." evidence="9">
    <original>I</original>
    <variation>A</variation>
    <location>
        <position position="130"/>
    </location>
</feature>
<feature type="mutagenesis site" description="Impairs cell growth, lowers aconitase activity and strongly decreases interaction with ISU1." evidence="9">
    <original>W</original>
    <variation>A</variation>
    <location>
        <position position="131"/>
    </location>
</feature>
<feature type="mutagenesis site" description="Lowers aconitase activity and no effexct on interaction with ISU1." evidence="9">
    <original>W</original>
    <variation>F</variation>
    <location>
        <position position="131"/>
    </location>
</feature>
<feature type="mutagenesis site" description="Impairs cell growth and lowers aconitase activity." evidence="9">
    <original>R</original>
    <variation>A</variation>
    <location>
        <position position="141"/>
    </location>
</feature>
<feature type="turn" evidence="20">
    <location>
        <begin position="64"/>
        <end position="67"/>
    </location>
</feature>
<feature type="helix" evidence="20">
    <location>
        <begin position="76"/>
        <end position="88"/>
    </location>
</feature>
<feature type="turn" evidence="20">
    <location>
        <begin position="89"/>
        <end position="91"/>
    </location>
</feature>
<feature type="strand" evidence="20">
    <location>
        <begin position="92"/>
        <end position="94"/>
    </location>
</feature>
<feature type="strand" evidence="19">
    <location>
        <begin position="96"/>
        <end position="99"/>
    </location>
</feature>
<feature type="strand" evidence="20">
    <location>
        <begin position="101"/>
        <end position="104"/>
    </location>
</feature>
<feature type="strand" evidence="20">
    <location>
        <begin position="106"/>
        <end position="112"/>
    </location>
</feature>
<feature type="turn" evidence="20">
    <location>
        <begin position="114"/>
        <end position="116"/>
    </location>
</feature>
<feature type="strand" evidence="20">
    <location>
        <begin position="119"/>
        <end position="122"/>
    </location>
</feature>
<feature type="strand" evidence="20">
    <location>
        <begin position="126"/>
        <end position="128"/>
    </location>
</feature>
<feature type="strand" evidence="20">
    <location>
        <begin position="131"/>
        <end position="134"/>
    </location>
</feature>
<feature type="turn" evidence="20">
    <location>
        <begin position="135"/>
        <end position="137"/>
    </location>
</feature>
<feature type="strand" evidence="20">
    <location>
        <begin position="138"/>
        <end position="151"/>
    </location>
</feature>
<feature type="turn" evidence="20">
    <location>
        <begin position="152"/>
        <end position="154"/>
    </location>
</feature>
<feature type="helix" evidence="20">
    <location>
        <begin position="158"/>
        <end position="171"/>
    </location>
</feature>
<proteinExistence type="evidence at protein level"/>
<evidence type="ECO:0000269" key="1">
    <source>
    </source>
</evidence>
<evidence type="ECO:0000269" key="2">
    <source>
    </source>
</evidence>
<evidence type="ECO:0000269" key="3">
    <source>
    </source>
</evidence>
<evidence type="ECO:0000269" key="4">
    <source>
    </source>
</evidence>
<evidence type="ECO:0000269" key="5">
    <source>
    </source>
</evidence>
<evidence type="ECO:0000269" key="6">
    <source>
    </source>
</evidence>
<evidence type="ECO:0000269" key="7">
    <source>
    </source>
</evidence>
<evidence type="ECO:0000269" key="8">
    <source>
    </source>
</evidence>
<evidence type="ECO:0000269" key="9">
    <source>
    </source>
</evidence>
<evidence type="ECO:0000269" key="10">
    <source>
    </source>
</evidence>
<evidence type="ECO:0000269" key="11">
    <source>
    </source>
</evidence>
<evidence type="ECO:0000269" key="12">
    <source>
    </source>
</evidence>
<evidence type="ECO:0000269" key="13">
    <source>
    </source>
</evidence>
<evidence type="ECO:0000305" key="14"/>
<evidence type="ECO:0000312" key="15">
    <source>
        <dbReference type="Proteomes" id="UP000002311"/>
    </source>
</evidence>
<evidence type="ECO:0000312" key="16">
    <source>
        <dbReference type="SGD" id="S000002278"/>
    </source>
</evidence>
<evidence type="ECO:0007744" key="17">
    <source>
        <dbReference type="PDB" id="5T0V"/>
    </source>
</evidence>
<evidence type="ECO:0007744" key="18">
    <source>
        <dbReference type="PDB" id="5TRE"/>
    </source>
</evidence>
<evidence type="ECO:0007829" key="19">
    <source>
        <dbReference type="PDB" id="2FQL"/>
    </source>
</evidence>
<evidence type="ECO:0007829" key="20">
    <source>
        <dbReference type="PDB" id="3OEQ"/>
    </source>
</evidence>
<dbReference type="EC" id="1.16.3.1"/>
<dbReference type="EMBL" id="Z74168">
    <property type="protein sequence ID" value="CAA98688.1"/>
    <property type="molecule type" value="Genomic_DNA"/>
</dbReference>
<dbReference type="EMBL" id="AY558160">
    <property type="protein sequence ID" value="AAS56486.1"/>
    <property type="molecule type" value="Genomic_DNA"/>
</dbReference>
<dbReference type="EMBL" id="BK006938">
    <property type="protein sequence ID" value="DAA11740.1"/>
    <property type="molecule type" value="Genomic_DNA"/>
</dbReference>
<dbReference type="PIR" id="S67663">
    <property type="entry name" value="S67663"/>
</dbReference>
<dbReference type="RefSeq" id="NP_010163.1">
    <property type="nucleotide sequence ID" value="NM_001180179.1"/>
</dbReference>
<dbReference type="PDB" id="2FQL">
    <property type="method" value="X-ray"/>
    <property type="resolution" value="3.01 A"/>
    <property type="chains" value="A=52-174"/>
</dbReference>
<dbReference type="PDB" id="2GA5">
    <property type="method" value="NMR"/>
    <property type="chains" value="A=53-174"/>
</dbReference>
<dbReference type="PDB" id="3OEQ">
    <property type="method" value="X-ray"/>
    <property type="resolution" value="2.96 A"/>
    <property type="chains" value="A=52-174"/>
</dbReference>
<dbReference type="PDB" id="3OER">
    <property type="method" value="X-ray"/>
    <property type="resolution" value="3.20 A"/>
    <property type="chains" value="A=52-174"/>
</dbReference>
<dbReference type="PDB" id="4EC2">
    <property type="method" value="X-ray"/>
    <property type="resolution" value="3.00 A"/>
    <property type="chains" value="A=52-174"/>
</dbReference>
<dbReference type="PDB" id="5T0V">
    <property type="method" value="EM"/>
    <property type="resolution" value="17.50 A"/>
    <property type="chains" value="A/B/C/D/E/F/G/H/I/J/K/L/M/N/O/P/Q/R/S/T/U/V/W/X=52-172"/>
</dbReference>
<dbReference type="PDB" id="5TRE">
    <property type="method" value="EM"/>
    <property type="resolution" value="15.60 A"/>
    <property type="chains" value="A/B/C/D/E/F/G/H/I/J/K/L/M/N/O/P/Q/R/S/T/U/V/W/X=52-172"/>
</dbReference>
<dbReference type="PDBsum" id="2FQL"/>
<dbReference type="PDBsum" id="2GA5"/>
<dbReference type="PDBsum" id="3OEQ"/>
<dbReference type="PDBsum" id="3OER"/>
<dbReference type="PDBsum" id="4EC2"/>
<dbReference type="PDBsum" id="5T0V"/>
<dbReference type="PDBsum" id="5TRE"/>
<dbReference type="BMRB" id="Q07540"/>
<dbReference type="EMDB" id="EMD-8341"/>
<dbReference type="EMDB" id="EMD-8458"/>
<dbReference type="SASBDB" id="Q07540"/>
<dbReference type="SMR" id="Q07540"/>
<dbReference type="BioGRID" id="31943">
    <property type="interactions" value="112"/>
</dbReference>
<dbReference type="ComplexPortal" id="CPX-392">
    <property type="entry name" value="Mitochondrial NIAUFX iron-sulfur cluster assembly complex"/>
</dbReference>
<dbReference type="DIP" id="DIP-7485N"/>
<dbReference type="FunCoup" id="Q07540">
    <property type="interactions" value="539"/>
</dbReference>
<dbReference type="IntAct" id="Q07540">
    <property type="interactions" value="11"/>
</dbReference>
<dbReference type="MINT" id="Q07540"/>
<dbReference type="STRING" id="4932.YDL120W"/>
<dbReference type="TCDB" id="9.B.21.1.2">
    <property type="family name" value="the frataxin (frataxin) family"/>
</dbReference>
<dbReference type="iPTMnet" id="Q07540"/>
<dbReference type="PaxDb" id="4932-YDL120W"/>
<dbReference type="PeptideAtlas" id="Q07540"/>
<dbReference type="EnsemblFungi" id="YDL120W_mRNA">
    <property type="protein sequence ID" value="YDL120W"/>
    <property type="gene ID" value="YDL120W"/>
</dbReference>
<dbReference type="GeneID" id="851437"/>
<dbReference type="KEGG" id="sce:YDL120W"/>
<dbReference type="AGR" id="SGD:S000002278"/>
<dbReference type="SGD" id="S000002278">
    <property type="gene designation" value="YFH1"/>
</dbReference>
<dbReference type="VEuPathDB" id="FungiDB:YDL120W"/>
<dbReference type="eggNOG" id="KOG3413">
    <property type="taxonomic scope" value="Eukaryota"/>
</dbReference>
<dbReference type="GeneTree" id="ENSGT00390000005811"/>
<dbReference type="HOGENOM" id="CLU_080880_2_4_1"/>
<dbReference type="InParanoid" id="Q07540"/>
<dbReference type="OMA" id="PNRYDYY"/>
<dbReference type="OrthoDB" id="1897642at2759"/>
<dbReference type="BioCyc" id="MetaCyc:G3O-29519-MONOMER"/>
<dbReference type="BioCyc" id="YEAST:G3O-29519-MONOMER"/>
<dbReference type="Reactome" id="R-SCE-1268020">
    <property type="pathway name" value="Mitochondrial protein import"/>
</dbReference>
<dbReference type="Reactome" id="R-SCE-1362409">
    <property type="pathway name" value="Mitochondrial iron-sulfur cluster biogenesis"/>
</dbReference>
<dbReference type="Reactome" id="R-SCE-9854311">
    <property type="pathway name" value="Maturation of TCA enzymes and regulation of TCA cycle"/>
</dbReference>
<dbReference type="Reactome" id="R-SCE-9865881">
    <property type="pathway name" value="Complex III assembly"/>
</dbReference>
<dbReference type="SABIO-RK" id="Q07540"/>
<dbReference type="BioGRID-ORCS" id="851437">
    <property type="hits" value="3 hits in 10 CRISPR screens"/>
</dbReference>
<dbReference type="EvolutionaryTrace" id="Q07540"/>
<dbReference type="PRO" id="PR:Q07540"/>
<dbReference type="Proteomes" id="UP000002311">
    <property type="component" value="Chromosome IV"/>
</dbReference>
<dbReference type="RNAct" id="Q07540">
    <property type="molecule type" value="protein"/>
</dbReference>
<dbReference type="GO" id="GO:1990229">
    <property type="term" value="C:iron-sulfur cluster assembly complex"/>
    <property type="evidence" value="ECO:0000303"/>
    <property type="project" value="ComplexPortal"/>
</dbReference>
<dbReference type="GO" id="GO:0005743">
    <property type="term" value="C:mitochondrial inner membrane"/>
    <property type="evidence" value="ECO:0000304"/>
    <property type="project" value="Reactome"/>
</dbReference>
<dbReference type="GO" id="GO:0005758">
    <property type="term" value="C:mitochondrial intermembrane space"/>
    <property type="evidence" value="ECO:0000304"/>
    <property type="project" value="Reactome"/>
</dbReference>
<dbReference type="GO" id="GO:0005759">
    <property type="term" value="C:mitochondrial matrix"/>
    <property type="evidence" value="ECO:0000314"/>
    <property type="project" value="SGD"/>
</dbReference>
<dbReference type="GO" id="GO:0005739">
    <property type="term" value="C:mitochondrion"/>
    <property type="evidence" value="ECO:0000314"/>
    <property type="project" value="SGD"/>
</dbReference>
<dbReference type="GO" id="GO:0051537">
    <property type="term" value="F:2 iron, 2 sulfur cluster binding"/>
    <property type="evidence" value="ECO:0000318"/>
    <property type="project" value="GO_Central"/>
</dbReference>
<dbReference type="GO" id="GO:0008199">
    <property type="term" value="F:ferric iron binding"/>
    <property type="evidence" value="ECO:0000318"/>
    <property type="project" value="GO_Central"/>
</dbReference>
<dbReference type="GO" id="GO:0008198">
    <property type="term" value="F:ferrous iron binding"/>
    <property type="evidence" value="ECO:0000314"/>
    <property type="project" value="SGD"/>
</dbReference>
<dbReference type="GO" id="GO:0004322">
    <property type="term" value="F:ferroxidase activity"/>
    <property type="evidence" value="ECO:0000314"/>
    <property type="project" value="SGD"/>
</dbReference>
<dbReference type="GO" id="GO:0042802">
    <property type="term" value="F:identical protein binding"/>
    <property type="evidence" value="ECO:0000353"/>
    <property type="project" value="IntAct"/>
</dbReference>
<dbReference type="GO" id="GO:0034986">
    <property type="term" value="F:iron chaperone activity"/>
    <property type="evidence" value="ECO:0000314"/>
    <property type="project" value="SGD"/>
</dbReference>
<dbReference type="GO" id="GO:0006749">
    <property type="term" value="P:glutathione metabolic process"/>
    <property type="evidence" value="ECO:0000315"/>
    <property type="project" value="SGD"/>
</dbReference>
<dbReference type="GO" id="GO:0006783">
    <property type="term" value="P:heme biosynthetic process"/>
    <property type="evidence" value="ECO:0007669"/>
    <property type="project" value="UniProtKB-KW"/>
</dbReference>
<dbReference type="GO" id="GO:0006879">
    <property type="term" value="P:intracellular iron ion homeostasis"/>
    <property type="evidence" value="ECO:0000314"/>
    <property type="project" value="SGD"/>
</dbReference>
<dbReference type="GO" id="GO:0006826">
    <property type="term" value="P:iron ion transport"/>
    <property type="evidence" value="ECO:0007669"/>
    <property type="project" value="UniProtKB-KW"/>
</dbReference>
<dbReference type="GO" id="GO:0016226">
    <property type="term" value="P:iron-sulfur cluster assembly"/>
    <property type="evidence" value="ECO:0000314"/>
    <property type="project" value="SGD"/>
</dbReference>
<dbReference type="GO" id="GO:0006121">
    <property type="term" value="P:mitochondrial electron transport, succinate to ubiquinone"/>
    <property type="evidence" value="ECO:0000315"/>
    <property type="project" value="UniProtKB"/>
</dbReference>
<dbReference type="GO" id="GO:0010040">
    <property type="term" value="P:response to iron(II) ion"/>
    <property type="evidence" value="ECO:0000315"/>
    <property type="project" value="UniProtKB"/>
</dbReference>
<dbReference type="GO" id="GO:0006979">
    <property type="term" value="P:response to oxidative stress"/>
    <property type="evidence" value="ECO:0000315"/>
    <property type="project" value="UniProtKB"/>
</dbReference>
<dbReference type="FunFam" id="3.30.920.10:FF:000004">
    <property type="entry name" value="Mitochondrial chaperone Frataxin"/>
    <property type="match status" value="1"/>
</dbReference>
<dbReference type="Gene3D" id="3.30.920.10">
    <property type="entry name" value="Frataxin/CyaY"/>
    <property type="match status" value="1"/>
</dbReference>
<dbReference type="InterPro" id="IPR017789">
    <property type="entry name" value="Frataxin"/>
</dbReference>
<dbReference type="InterPro" id="IPR002908">
    <property type="entry name" value="Frataxin/CyaY"/>
</dbReference>
<dbReference type="InterPro" id="IPR036524">
    <property type="entry name" value="Frataxin/CyaY_sf"/>
</dbReference>
<dbReference type="InterPro" id="IPR020895">
    <property type="entry name" value="Frataxin_CS"/>
</dbReference>
<dbReference type="NCBIfam" id="TIGR03421">
    <property type="entry name" value="FeS_CyaY"/>
    <property type="match status" value="1"/>
</dbReference>
<dbReference type="NCBIfam" id="TIGR03422">
    <property type="entry name" value="mito_frataxin"/>
    <property type="match status" value="1"/>
</dbReference>
<dbReference type="PANTHER" id="PTHR16821">
    <property type="entry name" value="FRATAXIN"/>
    <property type="match status" value="1"/>
</dbReference>
<dbReference type="PANTHER" id="PTHR16821:SF2">
    <property type="entry name" value="FRATAXIN, MITOCHONDRIAL"/>
    <property type="match status" value="1"/>
</dbReference>
<dbReference type="Pfam" id="PF01491">
    <property type="entry name" value="Frataxin_Cyay"/>
    <property type="match status" value="1"/>
</dbReference>
<dbReference type="SMART" id="SM01219">
    <property type="entry name" value="Frataxin_Cyay"/>
    <property type="match status" value="1"/>
</dbReference>
<dbReference type="SUPFAM" id="SSF55387">
    <property type="entry name" value="Frataxin/Nqo15-like"/>
    <property type="match status" value="1"/>
</dbReference>
<dbReference type="PROSITE" id="PS01344">
    <property type="entry name" value="FRATAXIN_1"/>
    <property type="match status" value="1"/>
</dbReference>
<dbReference type="PROSITE" id="PS50810">
    <property type="entry name" value="FRATAXIN_2"/>
    <property type="match status" value="1"/>
</dbReference>
<sequence>MIKRSLASLVRVSSVMGRRYMIAAAGGERARFCPAVTNKKNHTVNTFQKRFVESSTDGQVVPQEVLNLPLEKYHEEADDYLDHLLDSLEELSEAHPDCIPDVELSHGVMTLEIPAFGTYVINKQPPNKQIWLASPLSGPNRFDLLNGEWVSLRNGTKLTDILTEEVEKAISKSQ</sequence>
<protein>
    <recommendedName>
        <fullName>Frataxin homolog, mitochondrial</fullName>
        <ecNumber>1.16.3.1</ecNumber>
    </recommendedName>
    <component>
        <recommendedName>
            <fullName>Frataxin homolog intermediate form</fullName>
        </recommendedName>
    </component>
</protein>
<name>FRDA_YEAST</name>